<evidence type="ECO:0000255" key="1">
    <source>
        <dbReference type="HAMAP-Rule" id="MF_00005"/>
    </source>
</evidence>
<name>ASSY_BRUME</name>
<keyword id="KW-0028">Amino-acid biosynthesis</keyword>
<keyword id="KW-0055">Arginine biosynthesis</keyword>
<keyword id="KW-0067">ATP-binding</keyword>
<keyword id="KW-0963">Cytoplasm</keyword>
<keyword id="KW-0436">Ligase</keyword>
<keyword id="KW-0547">Nucleotide-binding</keyword>
<organism>
    <name type="scientific">Brucella melitensis biotype 1 (strain ATCC 23456 / CCUG 17765 / NCTC 10094 / 16M)</name>
    <dbReference type="NCBI Taxonomy" id="224914"/>
    <lineage>
        <taxon>Bacteria</taxon>
        <taxon>Pseudomonadati</taxon>
        <taxon>Pseudomonadota</taxon>
        <taxon>Alphaproteobacteria</taxon>
        <taxon>Hyphomicrobiales</taxon>
        <taxon>Brucellaceae</taxon>
        <taxon>Brucella/Ochrobactrum group</taxon>
        <taxon>Brucella</taxon>
    </lineage>
</organism>
<comment type="catalytic activity">
    <reaction evidence="1">
        <text>L-citrulline + L-aspartate + ATP = 2-(N(omega)-L-arginino)succinate + AMP + diphosphate + H(+)</text>
        <dbReference type="Rhea" id="RHEA:10932"/>
        <dbReference type="ChEBI" id="CHEBI:15378"/>
        <dbReference type="ChEBI" id="CHEBI:29991"/>
        <dbReference type="ChEBI" id="CHEBI:30616"/>
        <dbReference type="ChEBI" id="CHEBI:33019"/>
        <dbReference type="ChEBI" id="CHEBI:57472"/>
        <dbReference type="ChEBI" id="CHEBI:57743"/>
        <dbReference type="ChEBI" id="CHEBI:456215"/>
        <dbReference type="EC" id="6.3.4.5"/>
    </reaction>
</comment>
<comment type="pathway">
    <text evidence="1">Amino-acid biosynthesis; L-arginine biosynthesis; L-arginine from L-ornithine and carbamoyl phosphate: step 2/3.</text>
</comment>
<comment type="subunit">
    <text evidence="1">Homotetramer.</text>
</comment>
<comment type="subcellular location">
    <subcellularLocation>
        <location evidence="1">Cytoplasm</location>
    </subcellularLocation>
</comment>
<comment type="similarity">
    <text evidence="1">Belongs to the argininosuccinate synthase family. Type 1 subfamily.</text>
</comment>
<gene>
    <name evidence="1" type="primary">argG</name>
    <name type="ordered locus">BMEI1870</name>
</gene>
<proteinExistence type="inferred from homology"/>
<sequence length="406" mass="45273">MSKWKDVKKVVLAYSGGLDTSIILKWLQTELGAEVVTFTADLGQGEELEPARKKAEMLGIKEIFIEDVREEFVRDFVFPMFRANAVYEGVYLLGTSIARPLISKHLIDIAKKTGADAIAHGATGKGNDQVRFELSAYALNPDIKIIAPWRDWSFKSRTQLLEFAEQHQIPVAKDKKGEAPFSVDANLLHSSSEGKVLEDPSQEAPEYVHMRTISPETAPDKATIIKIGFEKGDAVSINGERLSPATLLAKLNDYGRDNGIGRLDLVENRFVGMKSRGVYETPGGTILLAAHRAIESITLDRGAAHLKDELMPRYAELIYYGFWFSPEREMLQAAIDHSQRHVEGEVTLKLYKGNVMVIGRESAKSLYSDKLVTFEDDQGAYDQKDAAGFIKLNALRLRTLAARDRK</sequence>
<protein>
    <recommendedName>
        <fullName evidence="1">Argininosuccinate synthase</fullName>
        <ecNumber evidence="1">6.3.4.5</ecNumber>
    </recommendedName>
    <alternativeName>
        <fullName evidence="1">Citrulline--aspartate ligase</fullName>
    </alternativeName>
</protein>
<dbReference type="EC" id="6.3.4.5" evidence="1"/>
<dbReference type="EMBL" id="AE008917">
    <property type="protein sequence ID" value="AAL53051.1"/>
    <property type="molecule type" value="Genomic_DNA"/>
</dbReference>
<dbReference type="PIR" id="AH3485">
    <property type="entry name" value="AH3485"/>
</dbReference>
<dbReference type="RefSeq" id="WP_002965322.1">
    <property type="nucleotide sequence ID" value="NZ_GG703778.1"/>
</dbReference>
<dbReference type="SMR" id="Q8YEK8"/>
<dbReference type="KEGG" id="bme:BMEI1870"/>
<dbReference type="KEGG" id="bmel:DK63_1618"/>
<dbReference type="PATRIC" id="fig|224914.52.peg.1707"/>
<dbReference type="eggNOG" id="COG0137">
    <property type="taxonomic scope" value="Bacteria"/>
</dbReference>
<dbReference type="PhylomeDB" id="Q8YEK8"/>
<dbReference type="UniPathway" id="UPA00068">
    <property type="reaction ID" value="UER00113"/>
</dbReference>
<dbReference type="Proteomes" id="UP000000419">
    <property type="component" value="Chromosome I"/>
</dbReference>
<dbReference type="GO" id="GO:0005737">
    <property type="term" value="C:cytoplasm"/>
    <property type="evidence" value="ECO:0007669"/>
    <property type="project" value="UniProtKB-SubCell"/>
</dbReference>
<dbReference type="GO" id="GO:0004055">
    <property type="term" value="F:argininosuccinate synthase activity"/>
    <property type="evidence" value="ECO:0007669"/>
    <property type="project" value="UniProtKB-UniRule"/>
</dbReference>
<dbReference type="GO" id="GO:0005524">
    <property type="term" value="F:ATP binding"/>
    <property type="evidence" value="ECO:0007669"/>
    <property type="project" value="UniProtKB-UniRule"/>
</dbReference>
<dbReference type="GO" id="GO:0000053">
    <property type="term" value="P:argininosuccinate metabolic process"/>
    <property type="evidence" value="ECO:0007669"/>
    <property type="project" value="TreeGrafter"/>
</dbReference>
<dbReference type="GO" id="GO:0006526">
    <property type="term" value="P:L-arginine biosynthetic process"/>
    <property type="evidence" value="ECO:0007669"/>
    <property type="project" value="UniProtKB-UniRule"/>
</dbReference>
<dbReference type="GO" id="GO:0000050">
    <property type="term" value="P:urea cycle"/>
    <property type="evidence" value="ECO:0007669"/>
    <property type="project" value="TreeGrafter"/>
</dbReference>
<dbReference type="CDD" id="cd01999">
    <property type="entry name" value="ASS"/>
    <property type="match status" value="1"/>
</dbReference>
<dbReference type="FunFam" id="3.40.50.620:FF:000019">
    <property type="entry name" value="Argininosuccinate synthase"/>
    <property type="match status" value="1"/>
</dbReference>
<dbReference type="FunFam" id="3.90.1260.10:FF:000007">
    <property type="entry name" value="Argininosuccinate synthase"/>
    <property type="match status" value="1"/>
</dbReference>
<dbReference type="Gene3D" id="3.90.1260.10">
    <property type="entry name" value="Argininosuccinate synthetase, chain A, domain 2"/>
    <property type="match status" value="1"/>
</dbReference>
<dbReference type="Gene3D" id="3.40.50.620">
    <property type="entry name" value="HUPs"/>
    <property type="match status" value="1"/>
</dbReference>
<dbReference type="Gene3D" id="1.20.5.470">
    <property type="entry name" value="Single helix bin"/>
    <property type="match status" value="1"/>
</dbReference>
<dbReference type="HAMAP" id="MF_00005">
    <property type="entry name" value="Arg_succ_synth_type1"/>
    <property type="match status" value="1"/>
</dbReference>
<dbReference type="InterPro" id="IPR048268">
    <property type="entry name" value="Arginosuc_syn_C"/>
</dbReference>
<dbReference type="InterPro" id="IPR048267">
    <property type="entry name" value="Arginosuc_syn_N"/>
</dbReference>
<dbReference type="InterPro" id="IPR001518">
    <property type="entry name" value="Arginosuc_synth"/>
</dbReference>
<dbReference type="InterPro" id="IPR018223">
    <property type="entry name" value="Arginosuc_synth_CS"/>
</dbReference>
<dbReference type="InterPro" id="IPR023434">
    <property type="entry name" value="Arginosuc_synth_type_1_subfam"/>
</dbReference>
<dbReference type="InterPro" id="IPR024074">
    <property type="entry name" value="AS_cat/multimer_dom_body"/>
</dbReference>
<dbReference type="InterPro" id="IPR014729">
    <property type="entry name" value="Rossmann-like_a/b/a_fold"/>
</dbReference>
<dbReference type="NCBIfam" id="TIGR00032">
    <property type="entry name" value="argG"/>
    <property type="match status" value="1"/>
</dbReference>
<dbReference type="NCBIfam" id="NF001770">
    <property type="entry name" value="PRK00509.1"/>
    <property type="match status" value="1"/>
</dbReference>
<dbReference type="PANTHER" id="PTHR11587">
    <property type="entry name" value="ARGININOSUCCINATE SYNTHASE"/>
    <property type="match status" value="1"/>
</dbReference>
<dbReference type="PANTHER" id="PTHR11587:SF2">
    <property type="entry name" value="ARGININOSUCCINATE SYNTHASE"/>
    <property type="match status" value="1"/>
</dbReference>
<dbReference type="Pfam" id="PF20979">
    <property type="entry name" value="Arginosuc_syn_C"/>
    <property type="match status" value="1"/>
</dbReference>
<dbReference type="Pfam" id="PF00764">
    <property type="entry name" value="Arginosuc_synth"/>
    <property type="match status" value="1"/>
</dbReference>
<dbReference type="SUPFAM" id="SSF52402">
    <property type="entry name" value="Adenine nucleotide alpha hydrolases-like"/>
    <property type="match status" value="1"/>
</dbReference>
<dbReference type="SUPFAM" id="SSF69864">
    <property type="entry name" value="Argininosuccinate synthetase, C-terminal domain"/>
    <property type="match status" value="1"/>
</dbReference>
<dbReference type="PROSITE" id="PS00564">
    <property type="entry name" value="ARGININOSUCCIN_SYN_1"/>
    <property type="match status" value="1"/>
</dbReference>
<dbReference type="PROSITE" id="PS00565">
    <property type="entry name" value="ARGININOSUCCIN_SYN_2"/>
    <property type="match status" value="1"/>
</dbReference>
<accession>Q8YEK8</accession>
<reference key="1">
    <citation type="journal article" date="2002" name="Proc. Natl. Acad. Sci. U.S.A.">
        <title>The genome sequence of the facultative intracellular pathogen Brucella melitensis.</title>
        <authorList>
            <person name="DelVecchio V.G."/>
            <person name="Kapatral V."/>
            <person name="Redkar R.J."/>
            <person name="Patra G."/>
            <person name="Mujer C."/>
            <person name="Los T."/>
            <person name="Ivanova N."/>
            <person name="Anderson I."/>
            <person name="Bhattacharyya A."/>
            <person name="Lykidis A."/>
            <person name="Reznik G."/>
            <person name="Jablonski L."/>
            <person name="Larsen N."/>
            <person name="D'Souza M."/>
            <person name="Bernal A."/>
            <person name="Mazur M."/>
            <person name="Goltsman E."/>
            <person name="Selkov E."/>
            <person name="Elzer P.H."/>
            <person name="Hagius S."/>
            <person name="O'Callaghan D."/>
            <person name="Letesson J.-J."/>
            <person name="Haselkorn R."/>
            <person name="Kyrpides N.C."/>
            <person name="Overbeek R."/>
        </authorList>
    </citation>
    <scope>NUCLEOTIDE SEQUENCE [LARGE SCALE GENOMIC DNA]</scope>
    <source>
        <strain>ATCC 23456 / CCUG 17765 / NCTC 10094 / 16M</strain>
    </source>
</reference>
<feature type="chain" id="PRO_0000148574" description="Argininosuccinate synthase">
    <location>
        <begin position="1"/>
        <end position="406"/>
    </location>
</feature>
<feature type="binding site" evidence="1">
    <location>
        <begin position="13"/>
        <end position="21"/>
    </location>
    <ligand>
        <name>ATP</name>
        <dbReference type="ChEBI" id="CHEBI:30616"/>
    </ligand>
</feature>
<feature type="binding site" evidence="1">
    <location>
        <position position="40"/>
    </location>
    <ligand>
        <name>ATP</name>
        <dbReference type="ChEBI" id="CHEBI:30616"/>
    </ligand>
</feature>
<feature type="binding site" evidence="1">
    <location>
        <position position="91"/>
    </location>
    <ligand>
        <name>L-citrulline</name>
        <dbReference type="ChEBI" id="CHEBI:57743"/>
    </ligand>
</feature>
<feature type="binding site" evidence="1">
    <location>
        <position position="96"/>
    </location>
    <ligand>
        <name>L-citrulline</name>
        <dbReference type="ChEBI" id="CHEBI:57743"/>
    </ligand>
</feature>
<feature type="binding site" evidence="1">
    <location>
        <position position="121"/>
    </location>
    <ligand>
        <name>ATP</name>
        <dbReference type="ChEBI" id="CHEBI:30616"/>
    </ligand>
</feature>
<feature type="binding site" evidence="1">
    <location>
        <position position="123"/>
    </location>
    <ligand>
        <name>L-aspartate</name>
        <dbReference type="ChEBI" id="CHEBI:29991"/>
    </ligand>
</feature>
<feature type="binding site" evidence="1">
    <location>
        <position position="127"/>
    </location>
    <ligand>
        <name>L-aspartate</name>
        <dbReference type="ChEBI" id="CHEBI:29991"/>
    </ligand>
</feature>
<feature type="binding site" evidence="1">
    <location>
        <position position="127"/>
    </location>
    <ligand>
        <name>L-citrulline</name>
        <dbReference type="ChEBI" id="CHEBI:57743"/>
    </ligand>
</feature>
<feature type="binding site" evidence="1">
    <location>
        <position position="128"/>
    </location>
    <ligand>
        <name>L-aspartate</name>
        <dbReference type="ChEBI" id="CHEBI:29991"/>
    </ligand>
</feature>
<feature type="binding site" evidence="1">
    <location>
        <position position="131"/>
    </location>
    <ligand>
        <name>L-citrulline</name>
        <dbReference type="ChEBI" id="CHEBI:57743"/>
    </ligand>
</feature>
<feature type="binding site" evidence="1">
    <location>
        <position position="182"/>
    </location>
    <ligand>
        <name>L-citrulline</name>
        <dbReference type="ChEBI" id="CHEBI:57743"/>
    </ligand>
</feature>
<feature type="binding site" evidence="1">
    <location>
        <position position="191"/>
    </location>
    <ligand>
        <name>L-citrulline</name>
        <dbReference type="ChEBI" id="CHEBI:57743"/>
    </ligand>
</feature>
<feature type="binding site" evidence="1">
    <location>
        <position position="267"/>
    </location>
    <ligand>
        <name>L-citrulline</name>
        <dbReference type="ChEBI" id="CHEBI:57743"/>
    </ligand>
</feature>
<feature type="binding site" evidence="1">
    <location>
        <position position="279"/>
    </location>
    <ligand>
        <name>L-citrulline</name>
        <dbReference type="ChEBI" id="CHEBI:57743"/>
    </ligand>
</feature>